<reference key="1">
    <citation type="journal article" date="2011" name="Proc. Natl. Acad. Sci. U.S.A.">
        <title>Genomic anatomy of Escherichia coli O157:H7 outbreaks.</title>
        <authorList>
            <person name="Eppinger M."/>
            <person name="Mammel M.K."/>
            <person name="Leclerc J.E."/>
            <person name="Ravel J."/>
            <person name="Cebula T.A."/>
        </authorList>
    </citation>
    <scope>NUCLEOTIDE SEQUENCE [LARGE SCALE GENOMIC DNA]</scope>
    <source>
        <strain>EC4115 / EHEC</strain>
    </source>
</reference>
<name>CAIC_ECO5E</name>
<gene>
    <name evidence="1" type="primary">caiC</name>
    <name type="ordered locus">ECH74115_0041</name>
</gene>
<accession>B5YYD1</accession>
<dbReference type="EC" id="6.2.1.48" evidence="1"/>
<dbReference type="EMBL" id="CP001164">
    <property type="protein sequence ID" value="ACI39310.1"/>
    <property type="molecule type" value="Genomic_DNA"/>
</dbReference>
<dbReference type="RefSeq" id="WP_001301863.1">
    <property type="nucleotide sequence ID" value="NC_011353.1"/>
</dbReference>
<dbReference type="SMR" id="B5YYD1"/>
<dbReference type="KEGG" id="ecf:ECH74115_0041"/>
<dbReference type="HOGENOM" id="CLU_000022_59_0_6"/>
<dbReference type="UniPathway" id="UPA00117"/>
<dbReference type="GO" id="GO:0051108">
    <property type="term" value="F:carnitine-CoA ligase activity"/>
    <property type="evidence" value="ECO:0007669"/>
    <property type="project" value="InterPro"/>
</dbReference>
<dbReference type="GO" id="GO:0051109">
    <property type="term" value="F:crotonobetaine-CoA ligase activity"/>
    <property type="evidence" value="ECO:0007669"/>
    <property type="project" value="InterPro"/>
</dbReference>
<dbReference type="GO" id="GO:0031956">
    <property type="term" value="F:medium-chain fatty acid-CoA ligase activity"/>
    <property type="evidence" value="ECO:0007669"/>
    <property type="project" value="TreeGrafter"/>
</dbReference>
<dbReference type="GO" id="GO:0009437">
    <property type="term" value="P:carnitine metabolic process"/>
    <property type="evidence" value="ECO:0007669"/>
    <property type="project" value="UniProtKB-UniRule"/>
</dbReference>
<dbReference type="GO" id="GO:0006631">
    <property type="term" value="P:fatty acid metabolic process"/>
    <property type="evidence" value="ECO:0007669"/>
    <property type="project" value="TreeGrafter"/>
</dbReference>
<dbReference type="CDD" id="cd05934">
    <property type="entry name" value="FACL_DitJ_like"/>
    <property type="match status" value="1"/>
</dbReference>
<dbReference type="FunFam" id="3.30.300.30:FF:000011">
    <property type="entry name" value="Crotonobetaine/carnitine--CoA ligase"/>
    <property type="match status" value="1"/>
</dbReference>
<dbReference type="FunFam" id="3.40.50.12780:FF:000017">
    <property type="entry name" value="Crotonobetaine/carnitine--CoA ligase"/>
    <property type="match status" value="1"/>
</dbReference>
<dbReference type="Gene3D" id="3.30.300.30">
    <property type="match status" value="1"/>
</dbReference>
<dbReference type="Gene3D" id="3.40.50.12780">
    <property type="entry name" value="N-terminal domain of ligase-like"/>
    <property type="match status" value="1"/>
</dbReference>
<dbReference type="HAMAP" id="MF_01524">
    <property type="entry name" value="CaiC"/>
    <property type="match status" value="1"/>
</dbReference>
<dbReference type="InterPro" id="IPR025110">
    <property type="entry name" value="AMP-bd_C"/>
</dbReference>
<dbReference type="InterPro" id="IPR045851">
    <property type="entry name" value="AMP-bd_C_sf"/>
</dbReference>
<dbReference type="InterPro" id="IPR020845">
    <property type="entry name" value="AMP-binding_CS"/>
</dbReference>
<dbReference type="InterPro" id="IPR000873">
    <property type="entry name" value="AMP-dep_synth/lig_dom"/>
</dbReference>
<dbReference type="InterPro" id="IPR042099">
    <property type="entry name" value="ANL_N_sf"/>
</dbReference>
<dbReference type="InterPro" id="IPR023456">
    <property type="entry name" value="CaiC"/>
</dbReference>
<dbReference type="NCBIfam" id="NF005947">
    <property type="entry name" value="PRK08008.1"/>
    <property type="match status" value="1"/>
</dbReference>
<dbReference type="PANTHER" id="PTHR43201">
    <property type="entry name" value="ACYL-COA SYNTHETASE"/>
    <property type="match status" value="1"/>
</dbReference>
<dbReference type="PANTHER" id="PTHR43201:SF5">
    <property type="entry name" value="MEDIUM-CHAIN ACYL-COA LIGASE ACSF2, MITOCHONDRIAL"/>
    <property type="match status" value="1"/>
</dbReference>
<dbReference type="Pfam" id="PF00501">
    <property type="entry name" value="AMP-binding"/>
    <property type="match status" value="1"/>
</dbReference>
<dbReference type="Pfam" id="PF13193">
    <property type="entry name" value="AMP-binding_C"/>
    <property type="match status" value="1"/>
</dbReference>
<dbReference type="SUPFAM" id="SSF56801">
    <property type="entry name" value="Acetyl-CoA synthetase-like"/>
    <property type="match status" value="1"/>
</dbReference>
<dbReference type="PROSITE" id="PS00455">
    <property type="entry name" value="AMP_BINDING"/>
    <property type="match status" value="1"/>
</dbReference>
<organism>
    <name type="scientific">Escherichia coli O157:H7 (strain EC4115 / EHEC)</name>
    <dbReference type="NCBI Taxonomy" id="444450"/>
    <lineage>
        <taxon>Bacteria</taxon>
        <taxon>Pseudomonadati</taxon>
        <taxon>Pseudomonadota</taxon>
        <taxon>Gammaproteobacteria</taxon>
        <taxon>Enterobacterales</taxon>
        <taxon>Enterobacteriaceae</taxon>
        <taxon>Escherichia</taxon>
    </lineage>
</organism>
<evidence type="ECO:0000255" key="1">
    <source>
        <dbReference type="HAMAP-Rule" id="MF_01524"/>
    </source>
</evidence>
<keyword id="KW-0436">Ligase</keyword>
<comment type="function">
    <text evidence="1">Catalyzes the transfer of CoA to carnitine, generating the initial carnitinyl-CoA needed for the CaiB reaction cycle. Also has activity toward crotonobetaine and gamma-butyrobetaine.</text>
</comment>
<comment type="catalytic activity">
    <reaction evidence="1">
        <text>4-(trimethylamino)butanoate + ATP + CoA = 4-(trimethylamino)butanoyl-CoA + AMP + diphosphate</text>
        <dbReference type="Rhea" id="RHEA:55960"/>
        <dbReference type="ChEBI" id="CHEBI:16244"/>
        <dbReference type="ChEBI" id="CHEBI:30616"/>
        <dbReference type="ChEBI" id="CHEBI:33019"/>
        <dbReference type="ChEBI" id="CHEBI:57287"/>
        <dbReference type="ChEBI" id="CHEBI:61513"/>
        <dbReference type="ChEBI" id="CHEBI:456215"/>
        <dbReference type="EC" id="6.2.1.48"/>
    </reaction>
</comment>
<comment type="catalytic activity">
    <reaction evidence="1">
        <text>crotonobetaine + ATP + CoA = crotonobetainyl-CoA + AMP + diphosphate</text>
        <dbReference type="Rhea" id="RHEA:30079"/>
        <dbReference type="ChEBI" id="CHEBI:17237"/>
        <dbReference type="ChEBI" id="CHEBI:30616"/>
        <dbReference type="ChEBI" id="CHEBI:33019"/>
        <dbReference type="ChEBI" id="CHEBI:57287"/>
        <dbReference type="ChEBI" id="CHEBI:60933"/>
        <dbReference type="ChEBI" id="CHEBI:456215"/>
        <dbReference type="EC" id="6.2.1.48"/>
    </reaction>
</comment>
<comment type="catalytic activity">
    <reaction evidence="1">
        <text>(R)-carnitine + ATP + CoA = (R)-carnitinyl-CoA + AMP + diphosphate</text>
        <dbReference type="Rhea" id="RHEA:28514"/>
        <dbReference type="ChEBI" id="CHEBI:16347"/>
        <dbReference type="ChEBI" id="CHEBI:30616"/>
        <dbReference type="ChEBI" id="CHEBI:33019"/>
        <dbReference type="ChEBI" id="CHEBI:57287"/>
        <dbReference type="ChEBI" id="CHEBI:60932"/>
        <dbReference type="ChEBI" id="CHEBI:456215"/>
        <dbReference type="EC" id="6.2.1.48"/>
    </reaction>
</comment>
<comment type="pathway">
    <text evidence="1">Amine and polyamine metabolism; carnitine metabolism.</text>
</comment>
<comment type="similarity">
    <text evidence="1">Belongs to the ATP-dependent AMP-binding enzyme family.</text>
</comment>
<proteinExistence type="inferred from homology"/>
<feature type="chain" id="PRO_1000200913" description="Crotonobetaine/carnitine--CoA ligase">
    <location>
        <begin position="1"/>
        <end position="517"/>
    </location>
</feature>
<sequence length="517" mass="58614">MDIIGGQHLRQMWDDLADVYGHKTALICESSGGVVNRYSYLELNQEINRTANLFYTLGIRKGDKVALHLDNCPEFIFCWFGLAKIGAIMVPINARLLREESAWILQNSQACLLVTSAQFYPMYQQIQQEDATQLRHICLTDVALPADDGVSSFTQLKNQQPATLCYAPPLSTDDTAEILFTSGTTSRPKGVVITHYNLRFAGYYSAWQCALRDDDVYLTVMPAFHIDCQCTAAMAAFSAGATFVLVEKYSARAFWGQVQKYRATITECIPMMIRTLMVQPPSANDRQHRLREVMFYLNLSEQEKDTFCERFGVRLLTSYGMTETIVGIIGDRPGDKRRWPSIGRAGFCYDAEIRDDHNRPLPAGEIGEICIKGVPGKTIFKEYFLNPKATAKVLEADGWLHTGDTGYRDEEGFFYFIDRRCNMIKRGGENVSCVELENIIATHPKIQDIVVVGIKDSIRDEAIKAFVVLNEGETLSEEEFFRFCEQNMAKFKVPSYLEIRKDLPRNCSGKIIRKNLK</sequence>
<protein>
    <recommendedName>
        <fullName evidence="1">Crotonobetaine/carnitine--CoA ligase</fullName>
        <ecNumber evidence="1">6.2.1.48</ecNumber>
    </recommendedName>
</protein>